<organism>
    <name type="scientific">Homo sapiens</name>
    <name type="common">Human</name>
    <dbReference type="NCBI Taxonomy" id="9606"/>
    <lineage>
        <taxon>Eukaryota</taxon>
        <taxon>Metazoa</taxon>
        <taxon>Chordata</taxon>
        <taxon>Craniata</taxon>
        <taxon>Vertebrata</taxon>
        <taxon>Euteleostomi</taxon>
        <taxon>Mammalia</taxon>
        <taxon>Eutheria</taxon>
        <taxon>Euarchontoglires</taxon>
        <taxon>Primates</taxon>
        <taxon>Haplorrhini</taxon>
        <taxon>Catarrhini</taxon>
        <taxon>Hominidae</taxon>
        <taxon>Homo</taxon>
    </lineage>
</organism>
<gene>
    <name type="primary">TC2N</name>
    <name type="synonym">C14orf47</name>
    <name type="synonym">MTAC2D1</name>
</gene>
<reference key="1">
    <citation type="journal article" date="2004" name="Nat. Genet.">
        <title>Complete sequencing and characterization of 21,243 full-length human cDNAs.</title>
        <authorList>
            <person name="Ota T."/>
            <person name="Suzuki Y."/>
            <person name="Nishikawa T."/>
            <person name="Otsuki T."/>
            <person name="Sugiyama T."/>
            <person name="Irie R."/>
            <person name="Wakamatsu A."/>
            <person name="Hayashi K."/>
            <person name="Sato H."/>
            <person name="Nagai K."/>
            <person name="Kimura K."/>
            <person name="Makita H."/>
            <person name="Sekine M."/>
            <person name="Obayashi M."/>
            <person name="Nishi T."/>
            <person name="Shibahara T."/>
            <person name="Tanaka T."/>
            <person name="Ishii S."/>
            <person name="Yamamoto J."/>
            <person name="Saito K."/>
            <person name="Kawai Y."/>
            <person name="Isono Y."/>
            <person name="Nakamura Y."/>
            <person name="Nagahari K."/>
            <person name="Murakami K."/>
            <person name="Yasuda T."/>
            <person name="Iwayanagi T."/>
            <person name="Wagatsuma M."/>
            <person name="Shiratori A."/>
            <person name="Sudo H."/>
            <person name="Hosoiri T."/>
            <person name="Kaku Y."/>
            <person name="Kodaira H."/>
            <person name="Kondo H."/>
            <person name="Sugawara M."/>
            <person name="Takahashi M."/>
            <person name="Kanda K."/>
            <person name="Yokoi T."/>
            <person name="Furuya T."/>
            <person name="Kikkawa E."/>
            <person name="Omura Y."/>
            <person name="Abe K."/>
            <person name="Kamihara K."/>
            <person name="Katsuta N."/>
            <person name="Sato K."/>
            <person name="Tanikawa M."/>
            <person name="Yamazaki M."/>
            <person name="Ninomiya K."/>
            <person name="Ishibashi T."/>
            <person name="Yamashita H."/>
            <person name="Murakawa K."/>
            <person name="Fujimori K."/>
            <person name="Tanai H."/>
            <person name="Kimata M."/>
            <person name="Watanabe M."/>
            <person name="Hiraoka S."/>
            <person name="Chiba Y."/>
            <person name="Ishida S."/>
            <person name="Ono Y."/>
            <person name="Takiguchi S."/>
            <person name="Watanabe S."/>
            <person name="Yosida M."/>
            <person name="Hotuta T."/>
            <person name="Kusano J."/>
            <person name="Kanehori K."/>
            <person name="Takahashi-Fujii A."/>
            <person name="Hara H."/>
            <person name="Tanase T.-O."/>
            <person name="Nomura Y."/>
            <person name="Togiya S."/>
            <person name="Komai F."/>
            <person name="Hara R."/>
            <person name="Takeuchi K."/>
            <person name="Arita M."/>
            <person name="Imose N."/>
            <person name="Musashino K."/>
            <person name="Yuuki H."/>
            <person name="Oshima A."/>
            <person name="Sasaki N."/>
            <person name="Aotsuka S."/>
            <person name="Yoshikawa Y."/>
            <person name="Matsunawa H."/>
            <person name="Ichihara T."/>
            <person name="Shiohata N."/>
            <person name="Sano S."/>
            <person name="Moriya S."/>
            <person name="Momiyama H."/>
            <person name="Satoh N."/>
            <person name="Takami S."/>
            <person name="Terashima Y."/>
            <person name="Suzuki O."/>
            <person name="Nakagawa S."/>
            <person name="Senoh A."/>
            <person name="Mizoguchi H."/>
            <person name="Goto Y."/>
            <person name="Shimizu F."/>
            <person name="Wakebe H."/>
            <person name="Hishigaki H."/>
            <person name="Watanabe T."/>
            <person name="Sugiyama A."/>
            <person name="Takemoto M."/>
            <person name="Kawakami B."/>
            <person name="Yamazaki M."/>
            <person name="Watanabe K."/>
            <person name="Kumagai A."/>
            <person name="Itakura S."/>
            <person name="Fukuzumi Y."/>
            <person name="Fujimori Y."/>
            <person name="Komiyama M."/>
            <person name="Tashiro H."/>
            <person name="Tanigami A."/>
            <person name="Fujiwara T."/>
            <person name="Ono T."/>
            <person name="Yamada K."/>
            <person name="Fujii Y."/>
            <person name="Ozaki K."/>
            <person name="Hirao M."/>
            <person name="Ohmori Y."/>
            <person name="Kawabata A."/>
            <person name="Hikiji T."/>
            <person name="Kobatake N."/>
            <person name="Inagaki H."/>
            <person name="Ikema Y."/>
            <person name="Okamoto S."/>
            <person name="Okitani R."/>
            <person name="Kawakami T."/>
            <person name="Noguchi S."/>
            <person name="Itoh T."/>
            <person name="Shigeta K."/>
            <person name="Senba T."/>
            <person name="Matsumura K."/>
            <person name="Nakajima Y."/>
            <person name="Mizuno T."/>
            <person name="Morinaga M."/>
            <person name="Sasaki M."/>
            <person name="Togashi T."/>
            <person name="Oyama M."/>
            <person name="Hata H."/>
            <person name="Watanabe M."/>
            <person name="Komatsu T."/>
            <person name="Mizushima-Sugano J."/>
            <person name="Satoh T."/>
            <person name="Shirai Y."/>
            <person name="Takahashi Y."/>
            <person name="Nakagawa K."/>
            <person name="Okumura K."/>
            <person name="Nagase T."/>
            <person name="Nomura N."/>
            <person name="Kikuchi H."/>
            <person name="Masuho Y."/>
            <person name="Yamashita R."/>
            <person name="Nakai K."/>
            <person name="Yada T."/>
            <person name="Nakamura Y."/>
            <person name="Ohara O."/>
            <person name="Isogai T."/>
            <person name="Sugano S."/>
        </authorList>
    </citation>
    <scope>NUCLEOTIDE SEQUENCE [LARGE SCALE MRNA] (ISOFORMS 1 AND 2)</scope>
    <scope>VARIANT THR-151</scope>
    <source>
        <tissue>Stomach cancer</tissue>
        <tissue>Trachea</tissue>
    </source>
</reference>
<reference key="2">
    <citation type="journal article" date="2003" name="Nature">
        <title>The DNA sequence and analysis of human chromosome 14.</title>
        <authorList>
            <person name="Heilig R."/>
            <person name="Eckenberg R."/>
            <person name="Petit J.-L."/>
            <person name="Fonknechten N."/>
            <person name="Da Silva C."/>
            <person name="Cattolico L."/>
            <person name="Levy M."/>
            <person name="Barbe V."/>
            <person name="De Berardinis V."/>
            <person name="Ureta-Vidal A."/>
            <person name="Pelletier E."/>
            <person name="Vico V."/>
            <person name="Anthouard V."/>
            <person name="Rowen L."/>
            <person name="Madan A."/>
            <person name="Qin S."/>
            <person name="Sun H."/>
            <person name="Du H."/>
            <person name="Pepin K."/>
            <person name="Artiguenave F."/>
            <person name="Robert C."/>
            <person name="Cruaud C."/>
            <person name="Bruels T."/>
            <person name="Jaillon O."/>
            <person name="Friedlander L."/>
            <person name="Samson G."/>
            <person name="Brottier P."/>
            <person name="Cure S."/>
            <person name="Segurens B."/>
            <person name="Aniere F."/>
            <person name="Samain S."/>
            <person name="Crespeau H."/>
            <person name="Abbasi N."/>
            <person name="Aiach N."/>
            <person name="Boscus D."/>
            <person name="Dickhoff R."/>
            <person name="Dors M."/>
            <person name="Dubois I."/>
            <person name="Friedman C."/>
            <person name="Gouyvenoux M."/>
            <person name="James R."/>
            <person name="Madan A."/>
            <person name="Mairey-Estrada B."/>
            <person name="Mangenot S."/>
            <person name="Martins N."/>
            <person name="Menard M."/>
            <person name="Oztas S."/>
            <person name="Ratcliffe A."/>
            <person name="Shaffer T."/>
            <person name="Trask B."/>
            <person name="Vacherie B."/>
            <person name="Bellemere C."/>
            <person name="Belser C."/>
            <person name="Besnard-Gonnet M."/>
            <person name="Bartol-Mavel D."/>
            <person name="Boutard M."/>
            <person name="Briez-Silla S."/>
            <person name="Combette S."/>
            <person name="Dufosse-Laurent V."/>
            <person name="Ferron C."/>
            <person name="Lechaplais C."/>
            <person name="Louesse C."/>
            <person name="Muselet D."/>
            <person name="Magdelenat G."/>
            <person name="Pateau E."/>
            <person name="Petit E."/>
            <person name="Sirvain-Trukniewicz P."/>
            <person name="Trybou A."/>
            <person name="Vega-Czarny N."/>
            <person name="Bataille E."/>
            <person name="Bluet E."/>
            <person name="Bordelais I."/>
            <person name="Dubois M."/>
            <person name="Dumont C."/>
            <person name="Guerin T."/>
            <person name="Haffray S."/>
            <person name="Hammadi R."/>
            <person name="Muanga J."/>
            <person name="Pellouin V."/>
            <person name="Robert D."/>
            <person name="Wunderle E."/>
            <person name="Gauguet G."/>
            <person name="Roy A."/>
            <person name="Sainte-Marthe L."/>
            <person name="Verdier J."/>
            <person name="Verdier-Discala C."/>
            <person name="Hillier L.W."/>
            <person name="Fulton L."/>
            <person name="McPherson J."/>
            <person name="Matsuda F."/>
            <person name="Wilson R."/>
            <person name="Scarpelli C."/>
            <person name="Gyapay G."/>
            <person name="Wincker P."/>
            <person name="Saurin W."/>
            <person name="Quetier F."/>
            <person name="Waterston R."/>
            <person name="Hood L."/>
            <person name="Weissenbach J."/>
        </authorList>
    </citation>
    <scope>NUCLEOTIDE SEQUENCE [LARGE SCALE GENOMIC DNA]</scope>
</reference>
<reference key="3">
    <citation type="journal article" date="2004" name="Genome Res.">
        <title>The status, quality, and expansion of the NIH full-length cDNA project: the Mammalian Gene Collection (MGC).</title>
        <authorList>
            <consortium name="The MGC Project Team"/>
        </authorList>
    </citation>
    <scope>NUCLEOTIDE SEQUENCE [LARGE SCALE MRNA] (ISOFORM 1)</scope>
    <scope>VARIANT THR-151</scope>
    <source>
        <tissue>Testis</tissue>
    </source>
</reference>
<reference key="4">
    <citation type="journal article" date="2008" name="J. Proteome Res.">
        <title>Phosphoproteome of resting human platelets.</title>
        <authorList>
            <person name="Zahedi R.P."/>
            <person name="Lewandrowski U."/>
            <person name="Wiesner J."/>
            <person name="Wortelkamp S."/>
            <person name="Moebius J."/>
            <person name="Schuetz C."/>
            <person name="Walter U."/>
            <person name="Gambaryan S."/>
            <person name="Sickmann A."/>
        </authorList>
    </citation>
    <scope>PHOSPHORYLATION [LARGE SCALE ANALYSIS] AT SER-168; SER-211; THR-214; THR-216 AND SER-218</scope>
    <scope>IDENTIFICATION BY MASS SPECTROMETRY [LARGE SCALE ANALYSIS]</scope>
    <source>
        <tissue>Platelet</tissue>
    </source>
</reference>
<reference key="5">
    <citation type="journal article" date="2013" name="J. Proteome Res.">
        <title>Toward a comprehensive characterization of a human cancer cell phosphoproteome.</title>
        <authorList>
            <person name="Zhou H."/>
            <person name="Di Palma S."/>
            <person name="Preisinger C."/>
            <person name="Peng M."/>
            <person name="Polat A.N."/>
            <person name="Heck A.J."/>
            <person name="Mohammed S."/>
        </authorList>
    </citation>
    <scope>PHOSPHORYLATION [LARGE SCALE ANALYSIS] AT SER-83; SER-156; SER-168 AND SER-174</scope>
    <scope>IDENTIFICATION BY MASS SPECTROMETRY [LARGE SCALE ANALYSIS]</scope>
    <source>
        <tissue>Cervix carcinoma</tissue>
        <tissue>Erythroleukemia</tissue>
    </source>
</reference>
<accession>Q8N9U0</accession>
<dbReference type="EMBL" id="AK093876">
    <property type="protein sequence ID" value="BAC04238.1"/>
    <property type="molecule type" value="mRNA"/>
</dbReference>
<dbReference type="EMBL" id="AK126359">
    <property type="protein sequence ID" value="BAC86538.1"/>
    <property type="molecule type" value="mRNA"/>
</dbReference>
<dbReference type="EMBL" id="AL121839">
    <property type="status" value="NOT_ANNOTATED_CDS"/>
    <property type="molecule type" value="Genomic_DNA"/>
</dbReference>
<dbReference type="EMBL" id="BC040503">
    <property type="protein sequence ID" value="AAH40503.1"/>
    <property type="molecule type" value="mRNA"/>
</dbReference>
<dbReference type="CCDS" id="CCDS73679.1">
    <molecule id="Q8N9U0-2"/>
</dbReference>
<dbReference type="CCDS" id="CCDS9897.1">
    <molecule id="Q8N9U0-1"/>
</dbReference>
<dbReference type="RefSeq" id="NP_001122067.2">
    <molecule id="Q8N9U0-1"/>
    <property type="nucleotide sequence ID" value="NM_001128595.3"/>
</dbReference>
<dbReference type="RefSeq" id="NP_001122068.2">
    <molecule id="Q8N9U0-1"/>
    <property type="nucleotide sequence ID" value="NM_001128596.3"/>
</dbReference>
<dbReference type="RefSeq" id="NP_001276063.2">
    <molecule id="Q8N9U0-2"/>
    <property type="nucleotide sequence ID" value="NM_001289134.2"/>
</dbReference>
<dbReference type="RefSeq" id="NP_689545.2">
    <molecule id="Q8N9U0-1"/>
    <property type="nucleotide sequence ID" value="NM_152332.6"/>
</dbReference>
<dbReference type="SMR" id="Q8N9U0"/>
<dbReference type="BioGRID" id="125812">
    <property type="interactions" value="17"/>
</dbReference>
<dbReference type="FunCoup" id="Q8N9U0">
    <property type="interactions" value="176"/>
</dbReference>
<dbReference type="IntAct" id="Q8N9U0">
    <property type="interactions" value="5"/>
</dbReference>
<dbReference type="STRING" id="9606.ENSP00000387882"/>
<dbReference type="GlyGen" id="Q8N9U0">
    <property type="glycosylation" value="3 sites, 1 O-linked glycan (2 sites)"/>
</dbReference>
<dbReference type="iPTMnet" id="Q8N9U0"/>
<dbReference type="PhosphoSitePlus" id="Q8N9U0"/>
<dbReference type="SwissPalm" id="Q8N9U0"/>
<dbReference type="BioMuta" id="TC2N"/>
<dbReference type="DMDM" id="317373282"/>
<dbReference type="jPOST" id="Q8N9U0"/>
<dbReference type="MassIVE" id="Q8N9U0"/>
<dbReference type="PaxDb" id="9606-ENSP00000387882"/>
<dbReference type="PeptideAtlas" id="Q8N9U0"/>
<dbReference type="ProteomicsDB" id="72584">
    <molecule id="Q8N9U0-1"/>
</dbReference>
<dbReference type="ProteomicsDB" id="72585">
    <molecule id="Q8N9U0-2"/>
</dbReference>
<dbReference type="Antibodypedia" id="26667">
    <property type="antibodies" value="87 antibodies from 19 providers"/>
</dbReference>
<dbReference type="DNASU" id="123036"/>
<dbReference type="Ensembl" id="ENST00000340892.9">
    <molecule id="Q8N9U0-1"/>
    <property type="protein sequence ID" value="ENSP00000343199.5"/>
    <property type="gene ID" value="ENSG00000165929.13"/>
</dbReference>
<dbReference type="Ensembl" id="ENST00000360594.9">
    <molecule id="Q8N9U0-1"/>
    <property type="protein sequence ID" value="ENSP00000353802.5"/>
    <property type="gene ID" value="ENSG00000165929.13"/>
</dbReference>
<dbReference type="Ensembl" id="ENST00000435962.7">
    <molecule id="Q8N9U0-1"/>
    <property type="protein sequence ID" value="ENSP00000387882.2"/>
    <property type="gene ID" value="ENSG00000165929.13"/>
</dbReference>
<dbReference type="Ensembl" id="ENST00000556018.5">
    <molecule id="Q8N9U0-2"/>
    <property type="protein sequence ID" value="ENSP00000451317.1"/>
    <property type="gene ID" value="ENSG00000165929.13"/>
</dbReference>
<dbReference type="Ensembl" id="ENST00000610758.4">
    <molecule id="Q8N9U0-1"/>
    <property type="protein sequence ID" value="ENSP00000483305.1"/>
    <property type="gene ID" value="ENSG00000276776.4"/>
</dbReference>
<dbReference type="Ensembl" id="ENST00000620359.2">
    <molecule id="Q8N9U0-1"/>
    <property type="protein sequence ID" value="ENSP00000478127.2"/>
    <property type="gene ID" value="ENSG00000276776.4"/>
</dbReference>
<dbReference type="Ensembl" id="ENST00000632584.1">
    <molecule id="Q8N9U0-1"/>
    <property type="protein sequence ID" value="ENSP00000487608.1"/>
    <property type="gene ID" value="ENSG00000276776.4"/>
</dbReference>
<dbReference type="Ensembl" id="ENST00000634120.1">
    <molecule id="Q8N9U0-2"/>
    <property type="protein sequence ID" value="ENSP00000488431.1"/>
    <property type="gene ID" value="ENSG00000276776.4"/>
</dbReference>
<dbReference type="GeneID" id="123036"/>
<dbReference type="KEGG" id="hsa:123036"/>
<dbReference type="MANE-Select" id="ENST00000435962.7">
    <property type="protein sequence ID" value="ENSP00000387882.2"/>
    <property type="RefSeq nucleotide sequence ID" value="NM_001128596.3"/>
    <property type="RefSeq protein sequence ID" value="NP_001122068.2"/>
</dbReference>
<dbReference type="UCSC" id="uc001xzt.6">
    <molecule id="Q8N9U0-1"/>
    <property type="organism name" value="human"/>
</dbReference>
<dbReference type="AGR" id="HGNC:19859"/>
<dbReference type="CTD" id="123036"/>
<dbReference type="DisGeNET" id="123036"/>
<dbReference type="GeneCards" id="TC2N"/>
<dbReference type="HGNC" id="HGNC:19859">
    <property type="gene designation" value="TC2N"/>
</dbReference>
<dbReference type="HPA" id="ENSG00000165929">
    <property type="expression patterns" value="Tissue enhanced (pancreas)"/>
</dbReference>
<dbReference type="MIM" id="619305">
    <property type="type" value="gene"/>
</dbReference>
<dbReference type="neXtProt" id="NX_Q8N9U0"/>
<dbReference type="OpenTargets" id="ENSG00000165929"/>
<dbReference type="PharmGKB" id="PA162405395"/>
<dbReference type="VEuPathDB" id="HostDB:ENSG00000165929"/>
<dbReference type="eggNOG" id="KOG1028">
    <property type="taxonomic scope" value="Eukaryota"/>
</dbReference>
<dbReference type="GeneTree" id="ENSGT00390000009196"/>
<dbReference type="HOGENOM" id="CLU_043542_0_0_1"/>
<dbReference type="InParanoid" id="Q8N9U0"/>
<dbReference type="OMA" id="QSSARCT"/>
<dbReference type="OrthoDB" id="9936710at2759"/>
<dbReference type="PAN-GO" id="Q8N9U0">
    <property type="GO annotations" value="1 GO annotation based on evolutionary models"/>
</dbReference>
<dbReference type="PhylomeDB" id="Q8N9U0"/>
<dbReference type="TreeFam" id="TF317035"/>
<dbReference type="PathwayCommons" id="Q8N9U0"/>
<dbReference type="SignaLink" id="Q8N9U0"/>
<dbReference type="BioGRID-ORCS" id="123036">
    <property type="hits" value="15 hits in 1151 CRISPR screens"/>
</dbReference>
<dbReference type="ChiTaRS" id="TC2N">
    <property type="organism name" value="human"/>
</dbReference>
<dbReference type="GeneWiki" id="TC2N"/>
<dbReference type="GenomeRNAi" id="123036"/>
<dbReference type="Pharos" id="Q8N9U0">
    <property type="development level" value="Tbio"/>
</dbReference>
<dbReference type="PRO" id="PR:Q8N9U0"/>
<dbReference type="Proteomes" id="UP000005640">
    <property type="component" value="Chromosome 14"/>
</dbReference>
<dbReference type="RNAct" id="Q8N9U0">
    <property type="molecule type" value="protein"/>
</dbReference>
<dbReference type="Bgee" id="ENSG00000165929">
    <property type="expression patterns" value="Expressed in body of pancreas and 102 other cell types or tissues"/>
</dbReference>
<dbReference type="ExpressionAtlas" id="Q8N9U0">
    <property type="expression patterns" value="baseline and differential"/>
</dbReference>
<dbReference type="GO" id="GO:0005634">
    <property type="term" value="C:nucleus"/>
    <property type="evidence" value="ECO:0000318"/>
    <property type="project" value="GO_Central"/>
</dbReference>
<dbReference type="CDD" id="cd08684">
    <property type="entry name" value="C2A_Tac2-N"/>
    <property type="match status" value="1"/>
</dbReference>
<dbReference type="CDD" id="cd08692">
    <property type="entry name" value="C2B_Tac2-N"/>
    <property type="match status" value="1"/>
</dbReference>
<dbReference type="FunFam" id="2.60.40.150:FF:000154">
    <property type="entry name" value="tandem C2 domains nuclear protein"/>
    <property type="match status" value="1"/>
</dbReference>
<dbReference type="Gene3D" id="2.60.40.150">
    <property type="entry name" value="C2 domain"/>
    <property type="match status" value="2"/>
</dbReference>
<dbReference type="InterPro" id="IPR000008">
    <property type="entry name" value="C2_dom"/>
</dbReference>
<dbReference type="InterPro" id="IPR035892">
    <property type="entry name" value="C2_domain_sf"/>
</dbReference>
<dbReference type="InterPro" id="IPR037786">
    <property type="entry name" value="C2A_Tac2-N"/>
</dbReference>
<dbReference type="InterPro" id="IPR037788">
    <property type="entry name" value="C2B_Tac2-N"/>
</dbReference>
<dbReference type="InterPro" id="IPR030542">
    <property type="entry name" value="Tac2-N"/>
</dbReference>
<dbReference type="PANTHER" id="PTHR46887">
    <property type="entry name" value="TANDEM C2 DOMAINS NUCLEAR PROTEIN"/>
    <property type="match status" value="1"/>
</dbReference>
<dbReference type="PANTHER" id="PTHR46887:SF1">
    <property type="entry name" value="TANDEM C2 DOMAINS NUCLEAR PROTEIN"/>
    <property type="match status" value="1"/>
</dbReference>
<dbReference type="Pfam" id="PF00168">
    <property type="entry name" value="C2"/>
    <property type="match status" value="2"/>
</dbReference>
<dbReference type="SMART" id="SM00239">
    <property type="entry name" value="C2"/>
    <property type="match status" value="2"/>
</dbReference>
<dbReference type="SUPFAM" id="SSF49562">
    <property type="entry name" value="C2 domain (Calcium/lipid-binding domain, CaLB)"/>
    <property type="match status" value="2"/>
</dbReference>
<dbReference type="PROSITE" id="PS50004">
    <property type="entry name" value="C2"/>
    <property type="match status" value="2"/>
</dbReference>
<keyword id="KW-0025">Alternative splicing</keyword>
<keyword id="KW-0539">Nucleus</keyword>
<keyword id="KW-0597">Phosphoprotein</keyword>
<keyword id="KW-1267">Proteomics identification</keyword>
<keyword id="KW-1185">Reference proteome</keyword>
<keyword id="KW-0677">Repeat</keyword>
<evidence type="ECO:0000250" key="1"/>
<evidence type="ECO:0000255" key="2"/>
<evidence type="ECO:0000255" key="3">
    <source>
        <dbReference type="PROSITE-ProRule" id="PRU00041"/>
    </source>
</evidence>
<evidence type="ECO:0000256" key="4">
    <source>
        <dbReference type="SAM" id="MobiDB-lite"/>
    </source>
</evidence>
<evidence type="ECO:0000269" key="5">
    <source>
    </source>
</evidence>
<evidence type="ECO:0000269" key="6">
    <source>
    </source>
</evidence>
<evidence type="ECO:0000303" key="7">
    <source>
    </source>
</evidence>
<evidence type="ECO:0000305" key="8"/>
<evidence type="ECO:0007744" key="9">
    <source>
    </source>
</evidence>
<evidence type="ECO:0007744" key="10">
    <source>
    </source>
</evidence>
<sequence length="490" mass="55284">MATEFIKSCCGGCFYGETEKHNFSVERDFKAAVPNSQNATISVPPLTSVSVKPQLGCTEDYLLSKLPSDGKEVPFVVPKFKLSYIQPRTQETPSHLEELEGSARASFGDRKVELSSSSQHGPSYDVYNPFYMYQHISPDLSRRFPPRSEVKRLYGSVCDLRTNKLPGSPGLSKSMFDLTNSSQRFIQRHDSLSSVPSSSSSRKNSQGSNRSLDTITLSGDERDFGRLNVKLFYNSSVEQIWITVLQCRDLSWPSSYGDTPTVSIKGILTLPKPVHFKSSAKEGSNAIEFMETFVFAIKLQNLQTVRLVFKIQTQTPRKKTIGECSMSLRTLSTQEMDYSLDITPPSKISVCHAELELGTCFQAVNSRIQLQILEARYLPSSSTPLTLSFFVKVGMFSSGELIYKKKTRLLKASNGRVKWGETMIFPLIQSEKEIVFLIKLYSRSSVRRKHFVGQIWISEDSNNIEAVNQWKETVINPEKVVIRWHKLNPS</sequence>
<proteinExistence type="evidence at protein level"/>
<protein>
    <recommendedName>
        <fullName>Tandem C2 domains nuclear protein</fullName>
    </recommendedName>
    <alternativeName>
        <fullName>Membrane targeting tandem C2 domain-containing protein 1</fullName>
    </alternativeName>
    <alternativeName>
        <fullName>Tandem C2 protein in nucleus</fullName>
        <shortName>Tac2-N</shortName>
    </alternativeName>
</protein>
<feature type="chain" id="PRO_0000072414" description="Tandem C2 domains nuclear protein">
    <location>
        <begin position="1"/>
        <end position="490"/>
    </location>
</feature>
<feature type="domain" description="C2 1" evidence="3">
    <location>
        <begin position="223"/>
        <end position="342"/>
    </location>
</feature>
<feature type="domain" description="C2 2" evidence="3">
    <location>
        <begin position="344"/>
        <end position="471"/>
    </location>
</feature>
<feature type="region of interest" description="Disordered" evidence="4">
    <location>
        <begin position="189"/>
        <end position="215"/>
    </location>
</feature>
<feature type="short sequence motif" description="Nuclear localization signal" evidence="2">
    <location>
        <begin position="447"/>
        <end position="449"/>
    </location>
</feature>
<feature type="compositionally biased region" description="Low complexity" evidence="4">
    <location>
        <begin position="192"/>
        <end position="211"/>
    </location>
</feature>
<feature type="modified residue" description="Phosphoserine" evidence="10">
    <location>
        <position position="83"/>
    </location>
</feature>
<feature type="modified residue" description="Phosphoserine" evidence="10">
    <location>
        <position position="156"/>
    </location>
</feature>
<feature type="modified residue" description="Phosphoserine" evidence="9 10">
    <location>
        <position position="168"/>
    </location>
</feature>
<feature type="modified residue" description="Phosphoserine" evidence="10">
    <location>
        <position position="174"/>
    </location>
</feature>
<feature type="modified residue" description="Phosphoserine" evidence="9">
    <location>
        <position position="211"/>
    </location>
</feature>
<feature type="modified residue" description="Phosphothreonine" evidence="9">
    <location>
        <position position="214"/>
    </location>
</feature>
<feature type="modified residue" description="Phosphothreonine" evidence="9">
    <location>
        <position position="216"/>
    </location>
</feature>
<feature type="modified residue" description="Phosphoserine" evidence="9">
    <location>
        <position position="218"/>
    </location>
</feature>
<feature type="splice variant" id="VSP_008572" description="In isoform 2." evidence="7">
    <location>
        <begin position="286"/>
        <end position="349"/>
    </location>
</feature>
<feature type="sequence variant" id="VAR_051405" description="In dbSNP:rs2402073." evidence="5 6">
    <original>K</original>
    <variation>T</variation>
    <location>
        <position position="151"/>
    </location>
</feature>
<feature type="sequence variant" id="VAR_051406" description="In dbSNP:rs8020529.">
    <original>S</original>
    <variation>N</variation>
    <location>
        <position position="172"/>
    </location>
</feature>
<feature type="sequence conflict" description="In Ref. 1; BAC86538." evidence="8" ref="1">
    <original>D</original>
    <variation>G</variation>
    <location>
        <position position="60"/>
    </location>
</feature>
<name>TAC2N_HUMAN</name>
<comment type="subcellular location">
    <subcellularLocation>
        <location evidence="1">Nucleus</location>
    </subcellularLocation>
</comment>
<comment type="alternative products">
    <event type="alternative splicing"/>
    <isoform>
        <id>Q8N9U0-1</id>
        <name>1</name>
        <sequence type="displayed"/>
    </isoform>
    <isoform>
        <id>Q8N9U0-2</id>
        <name>2</name>
        <sequence type="described" ref="VSP_008572"/>
    </isoform>
</comment>